<organism>
    <name type="scientific">Natronomonas pharaonis</name>
    <name type="common">Natronobacterium pharaonis</name>
    <dbReference type="NCBI Taxonomy" id="2257"/>
    <lineage>
        <taxon>Archaea</taxon>
        <taxon>Methanobacteriati</taxon>
        <taxon>Methanobacteriota</taxon>
        <taxon>Stenosarchaea group</taxon>
        <taxon>Halobacteria</taxon>
        <taxon>Halobacteriales</taxon>
        <taxon>Haloarculaceae</taxon>
        <taxon>Natronomonas</taxon>
    </lineage>
</organism>
<protein>
    <recommendedName>
        <fullName>Sensory rhodopsin-2</fullName>
    </recommendedName>
    <alternativeName>
        <fullName>Sensory rhodopsin II</fullName>
        <shortName>SR-II</shortName>
    </alternativeName>
</protein>
<reference key="1">
    <citation type="journal article" date="1995" name="Proc. Natl. Acad. Sci. U.S.A.">
        <title>The primary structure of sensory rhodopsin II: a member of an additional retinal protein subgroup is coexpressed with its transducer, the halobacterial transducer of rhodopsin II.</title>
        <authorList>
            <person name="Seidel R."/>
            <person name="Scharf B."/>
            <person name="Gautel M."/>
            <person name="Kleine K."/>
            <person name="Oesterhelt D."/>
            <person name="Engelhard M."/>
        </authorList>
    </citation>
    <scope>NUCLEOTIDE SEQUENCE [GENOMIC DNA]</scope>
    <source>
        <strain>SP-1 / 28</strain>
    </source>
</reference>
<reference key="2">
    <citation type="journal article" date="1992" name="Eur. J. Biochem.">
        <title>Biochemical and photochemical properties of the photophobic receptors from Halobacterium halobium and Natronobacterium pharaonis.</title>
        <authorList>
            <person name="Scharf B."/>
            <person name="Pevec B."/>
            <person name="Hess B."/>
            <person name="Engelhard M."/>
        </authorList>
    </citation>
    <scope>FUNCTION</scope>
    <scope>SUBCELLULAR LOCATION</scope>
    <source>
        <strain>SP-1 / 28</strain>
    </source>
</reference>
<reference key="3">
    <citation type="journal article" date="1998" name="FEBS Lett.">
        <title>Heterologous coexpression of the blue light receptor psRII and its transducer pHtrII from Natronobacterium pharaonis in the Halobacterium salinarium strain Pho81/w restores negative phototaxis.</title>
        <authorList>
            <person name="Luttenberg B."/>
            <person name="Wolff E.K."/>
            <person name="Engelhard M."/>
        </authorList>
    </citation>
    <scope>FUNCTION</scope>
</reference>
<reference key="4">
    <citation type="journal article" date="2001" name="Science">
        <title>Crystal structure of sensory rhodopsin II at 2.4 Angstroms: insights into color tuning and transducer interaction.</title>
        <authorList>
            <person name="Luecke H."/>
            <person name="Schobert B."/>
            <person name="Lanyi J.K."/>
            <person name="Spudich E.N."/>
            <person name="Spudich J.L."/>
        </authorList>
    </citation>
    <scope>X-RAY CRYSTALLOGRAPHY (2.4 ANGSTROMS) OF 1-217</scope>
    <scope>RETINAL-BINDING SITE</scope>
</reference>
<reference key="5">
    <citation type="journal article" date="2002" name="Nature">
        <title>Molecular basis of transmembrane signalling by sensory rhodopsin II-transducer complex.</title>
        <authorList>
            <person name="Gordeliy V.I."/>
            <person name="Labahn J."/>
            <person name="Moukhametzianov R."/>
            <person name="Efremov R."/>
            <person name="Granzin J."/>
            <person name="Schlesinger R."/>
            <person name="Bueldt G."/>
            <person name="Savopol T."/>
            <person name="Scheidig A.J."/>
            <person name="Klare J.P."/>
            <person name="Engelhard M."/>
        </authorList>
    </citation>
    <scope>X-RAY CRYSTALLOGRAPHY (1.9 ANGSTROMS) OF 1-225</scope>
    <scope>FUNCTION</scope>
    <scope>INTERACTION WITH HTR-II</scope>
    <scope>RETINAL-BINDING SITE</scope>
</reference>
<reference key="6">
    <citation type="journal article" date="2001" name="Proc. Natl. Acad. Sci. U.S.A.">
        <title>X-ray structure of sensory rhodopsin II at 2.1-A resolution.</title>
        <authorList>
            <person name="Royant A."/>
            <person name="Nollert P."/>
            <person name="Edman K."/>
            <person name="Neutze R."/>
            <person name="Landau E.M."/>
            <person name="Pebay-Peyroula E."/>
            <person name="Navarro J."/>
        </authorList>
    </citation>
    <scope>X-RAY CRYSTALLOGRAPHY (2.1 ANGSTROMS) OF 2-219</scope>
    <scope>SUBUNIT</scope>
    <scope>RETINAL-BINDING SITE</scope>
</reference>
<reference key="7">
    <citation type="journal article" date="2002" name="Structure">
        <title>Early structural rearrangements in the photocycle of an integral membrane sensory receptor.</title>
        <authorList>
            <person name="Edman K."/>
            <person name="Royant A."/>
            <person name="Nollert P."/>
            <person name="Maxwell C.A."/>
            <person name="Pebay-Peyroula E."/>
            <person name="Navarro J."/>
            <person name="Neutze R."/>
            <person name="Landau E.M."/>
        </authorList>
    </citation>
    <scope>X-RAY CRYSTALLOGRAPHY (2.27 ANGSTROMS) OF 2-219</scope>
    <scope>SUBCELLULAR LOCATION</scope>
    <scope>RETINAL-BINDING SITE</scope>
</reference>
<comment type="function">
    <text evidence="3 4 5">Photophobic photoreceptor responsible for the negative phototaxis. Activates the sensory rhodopsin II transducer (HTR-II) in response to blue light.</text>
</comment>
<comment type="subunit">
    <text evidence="1 3">Homodimer. Interacts with HTR-II.</text>
</comment>
<comment type="interaction">
    <interactant intactId="EBI-1034509">
        <id>P42196</id>
    </interactant>
    <interactant intactId="EBI-1034515">
        <id>P42259</id>
        <label>htr2</label>
    </interactant>
    <organismsDiffer>false</organismsDiffer>
    <experiments>5</experiments>
</comment>
<comment type="subcellular location">
    <subcellularLocation>
        <location evidence="2 4">Cell membrane</location>
        <topology evidence="2 4">Multi-pass membrane protein</topology>
    </subcellularLocation>
</comment>
<comment type="similarity">
    <text evidence="6">Belongs to the archaeal/bacterial/fungal opsin family.</text>
</comment>
<feature type="chain" id="PRO_0000196282" description="Sensory rhodopsin-2">
    <location>
        <begin position="1"/>
        <end position="239"/>
    </location>
</feature>
<feature type="topological domain" description="Extracellular">
    <location>
        <begin position="1"/>
        <end position="3"/>
    </location>
</feature>
<feature type="transmembrane region" description="Helical; Name=Helix A">
    <location>
        <begin position="4"/>
        <end position="25"/>
    </location>
</feature>
<feature type="topological domain" description="Cytoplasmic">
    <location>
        <begin position="26"/>
        <end position="33"/>
    </location>
</feature>
<feature type="transmembrane region" description="Helical; Name=Helix B">
    <location>
        <begin position="34"/>
        <end position="55"/>
    </location>
</feature>
<feature type="topological domain" description="Extracellular">
    <location>
        <begin position="56"/>
        <end position="69"/>
    </location>
</feature>
<feature type="transmembrane region" description="Helical; Name=Helix C">
    <location>
        <begin position="70"/>
        <end position="91"/>
    </location>
</feature>
<feature type="topological domain" description="Cytoplasmic">
    <location>
        <begin position="92"/>
        <end position="94"/>
    </location>
</feature>
<feature type="transmembrane region" description="Helical; Name=Helix D">
    <location>
        <begin position="95"/>
        <end position="117"/>
    </location>
</feature>
<feature type="topological domain" description="Extracellular">
    <location>
        <begin position="118"/>
        <end position="121"/>
    </location>
</feature>
<feature type="transmembrane region" description="Helical; Name=Helix E">
    <location>
        <begin position="122"/>
        <end position="149"/>
    </location>
</feature>
<feature type="topological domain" description="Cytoplasmic">
    <location>
        <begin position="150"/>
        <end position="153"/>
    </location>
</feature>
<feature type="transmembrane region" description="Helical; Name=Helix F">
    <location>
        <begin position="154"/>
        <end position="181"/>
    </location>
</feature>
<feature type="topological domain" description="Extracellular">
    <location>
        <begin position="182"/>
        <end position="189"/>
    </location>
</feature>
<feature type="transmembrane region" description="Helical; Name=Helix G">
    <location>
        <begin position="190"/>
        <end position="222"/>
    </location>
</feature>
<feature type="topological domain" description="Cytoplasmic">
    <location>
        <begin position="223"/>
        <end position="239"/>
    </location>
</feature>
<feature type="modified residue" description="N6-(retinylidene)lysine">
    <location>
        <position position="205"/>
    </location>
</feature>
<feature type="helix" evidence="7">
    <location>
        <begin position="2"/>
        <end position="26"/>
    </location>
</feature>
<feature type="turn" evidence="7">
    <location>
        <begin position="31"/>
        <end position="33"/>
    </location>
</feature>
<feature type="helix" evidence="7">
    <location>
        <begin position="34"/>
        <end position="55"/>
    </location>
</feature>
<feature type="turn" evidence="8">
    <location>
        <begin position="56"/>
        <end position="59"/>
    </location>
</feature>
<feature type="strand" evidence="7">
    <location>
        <begin position="60"/>
        <end position="63"/>
    </location>
</feature>
<feature type="strand" evidence="7">
    <location>
        <begin position="66"/>
        <end position="69"/>
    </location>
</feature>
<feature type="helix" evidence="7">
    <location>
        <begin position="70"/>
        <end position="91"/>
    </location>
</feature>
<feature type="helix" evidence="7">
    <location>
        <begin position="95"/>
        <end position="117"/>
    </location>
</feature>
<feature type="helix" evidence="7">
    <location>
        <begin position="123"/>
        <end position="142"/>
    </location>
</feature>
<feature type="helix" evidence="7">
    <location>
        <begin position="144"/>
        <end position="149"/>
    </location>
</feature>
<feature type="helix" evidence="7">
    <location>
        <begin position="154"/>
        <end position="171"/>
    </location>
</feature>
<feature type="helix" evidence="7">
    <location>
        <begin position="173"/>
        <end position="180"/>
    </location>
</feature>
<feature type="turn" evidence="7">
    <location>
        <begin position="182"/>
        <end position="185"/>
    </location>
</feature>
<feature type="helix" evidence="7">
    <location>
        <begin position="190"/>
        <end position="218"/>
    </location>
</feature>
<evidence type="ECO:0000269" key="1">
    <source>
    </source>
</evidence>
<evidence type="ECO:0000269" key="2">
    <source>
    </source>
</evidence>
<evidence type="ECO:0000269" key="3">
    <source>
    </source>
</evidence>
<evidence type="ECO:0000269" key="4">
    <source>
    </source>
</evidence>
<evidence type="ECO:0000269" key="5">
    <source>
    </source>
</evidence>
<evidence type="ECO:0000305" key="6"/>
<evidence type="ECO:0007829" key="7">
    <source>
        <dbReference type="PDB" id="3QAP"/>
    </source>
</evidence>
<evidence type="ECO:0007829" key="8">
    <source>
        <dbReference type="PDB" id="7PNC"/>
    </source>
</evidence>
<proteinExistence type="evidence at protein level"/>
<name>BACS2_NATPH</name>
<dbReference type="EMBL" id="Z35086">
    <property type="protein sequence ID" value="CAA84469.1"/>
    <property type="molecule type" value="Genomic_DNA"/>
</dbReference>
<dbReference type="PIR" id="S55300">
    <property type="entry name" value="S55300"/>
</dbReference>
<dbReference type="PDB" id="1GU8">
    <property type="method" value="X-ray"/>
    <property type="resolution" value="2.27 A"/>
    <property type="chains" value="A=1-239"/>
</dbReference>
<dbReference type="PDB" id="1GUE">
    <property type="method" value="X-ray"/>
    <property type="resolution" value="2.27 A"/>
    <property type="chains" value="A=1-239"/>
</dbReference>
<dbReference type="PDB" id="1H2S">
    <property type="method" value="X-ray"/>
    <property type="resolution" value="1.93 A"/>
    <property type="chains" value="A=1-225"/>
</dbReference>
<dbReference type="PDB" id="1H68">
    <property type="method" value="X-ray"/>
    <property type="resolution" value="2.10 A"/>
    <property type="chains" value="A=1-239"/>
</dbReference>
<dbReference type="PDB" id="1JGJ">
    <property type="method" value="X-ray"/>
    <property type="resolution" value="2.40 A"/>
    <property type="chains" value="A=1-217"/>
</dbReference>
<dbReference type="PDB" id="2F93">
    <property type="method" value="X-ray"/>
    <property type="resolution" value="2.00 A"/>
    <property type="chains" value="A=2-239"/>
</dbReference>
<dbReference type="PDB" id="2F95">
    <property type="method" value="X-ray"/>
    <property type="resolution" value="2.20 A"/>
    <property type="chains" value="A=2-239"/>
</dbReference>
<dbReference type="PDB" id="3QAP">
    <property type="method" value="X-ray"/>
    <property type="resolution" value="1.90 A"/>
    <property type="chains" value="A=1-239"/>
</dbReference>
<dbReference type="PDB" id="3QDC">
    <property type="method" value="X-ray"/>
    <property type="resolution" value="2.50 A"/>
    <property type="chains" value="A=1-239"/>
</dbReference>
<dbReference type="PDB" id="4GYC">
    <property type="method" value="X-ray"/>
    <property type="resolution" value="2.05 A"/>
    <property type="chains" value="A=1-239"/>
</dbReference>
<dbReference type="PDB" id="5JJE">
    <property type="method" value="X-ray"/>
    <property type="resolution" value="1.90 A"/>
    <property type="chains" value="A=2-239"/>
</dbReference>
<dbReference type="PDB" id="5JJF">
    <property type="method" value="X-ray"/>
    <property type="resolution" value="1.90 A"/>
    <property type="chains" value="A=2-239"/>
</dbReference>
<dbReference type="PDB" id="5JJJ">
    <property type="method" value="X-ray"/>
    <property type="resolution" value="2.50 A"/>
    <property type="chains" value="A=2-239"/>
</dbReference>
<dbReference type="PDB" id="5JJN">
    <property type="method" value="X-ray"/>
    <property type="resolution" value="2.25 A"/>
    <property type="chains" value="A/C=2-239"/>
</dbReference>
<dbReference type="PDB" id="7PNC">
    <property type="method" value="X-ray"/>
    <property type="resolution" value="2.20 A"/>
    <property type="chains" value="A=1-239"/>
</dbReference>
<dbReference type="PDB" id="7ZCM">
    <property type="method" value="X-ray"/>
    <property type="resolution" value="2.85 A"/>
    <property type="chains" value="A=1-225"/>
</dbReference>
<dbReference type="PDB" id="8PWG">
    <property type="method" value="X-ray"/>
    <property type="resolution" value="1.94 A"/>
    <property type="chains" value="A=1-239"/>
</dbReference>
<dbReference type="PDB" id="8PWI">
    <property type="method" value="X-ray"/>
    <property type="resolution" value="1.96 A"/>
    <property type="chains" value="A=1-239"/>
</dbReference>
<dbReference type="PDB" id="8PWJ">
    <property type="method" value="X-ray"/>
    <property type="resolution" value="2.14 A"/>
    <property type="chains" value="A=1-239"/>
</dbReference>
<dbReference type="PDB" id="8PWP">
    <property type="method" value="X-ray"/>
    <property type="resolution" value="2.08 A"/>
    <property type="chains" value="A=1-239"/>
</dbReference>
<dbReference type="PDB" id="8PWQ">
    <property type="method" value="X-ray"/>
    <property type="resolution" value="1.95 A"/>
    <property type="chains" value="A=1-239"/>
</dbReference>
<dbReference type="PDB" id="8QQO">
    <property type="method" value="X-ray"/>
    <property type="resolution" value="2.47 A"/>
    <property type="chains" value="A=1-239"/>
</dbReference>
<dbReference type="PDBsum" id="1GU8"/>
<dbReference type="PDBsum" id="1GUE"/>
<dbReference type="PDBsum" id="1H2S"/>
<dbReference type="PDBsum" id="1H68"/>
<dbReference type="PDBsum" id="1JGJ"/>
<dbReference type="PDBsum" id="2F93"/>
<dbReference type="PDBsum" id="2F95"/>
<dbReference type="PDBsum" id="3QAP"/>
<dbReference type="PDBsum" id="3QDC"/>
<dbReference type="PDBsum" id="4GYC"/>
<dbReference type="PDBsum" id="5JJE"/>
<dbReference type="PDBsum" id="5JJF"/>
<dbReference type="PDBsum" id="5JJJ"/>
<dbReference type="PDBsum" id="5JJN"/>
<dbReference type="PDBsum" id="7PNC"/>
<dbReference type="PDBsum" id="7ZCM"/>
<dbReference type="PDBsum" id="8PWG"/>
<dbReference type="PDBsum" id="8PWI"/>
<dbReference type="PDBsum" id="8PWJ"/>
<dbReference type="PDBsum" id="8PWP"/>
<dbReference type="PDBsum" id="8PWQ"/>
<dbReference type="PDBsum" id="8QQO"/>
<dbReference type="BMRB" id="P42196"/>
<dbReference type="SASBDB" id="P42196"/>
<dbReference type="SMR" id="P42196"/>
<dbReference type="DIP" id="DIP-35282N"/>
<dbReference type="IntAct" id="P42196">
    <property type="interactions" value="1"/>
</dbReference>
<dbReference type="TCDB" id="3.E.1.3.3">
    <property type="family name" value="the ion-translocating microbial rhodopsin (mr) family"/>
</dbReference>
<dbReference type="EvolutionaryTrace" id="P42196"/>
<dbReference type="GO" id="GO:0005886">
    <property type="term" value="C:plasma membrane"/>
    <property type="evidence" value="ECO:0007669"/>
    <property type="project" value="UniProtKB-SubCell"/>
</dbReference>
<dbReference type="GO" id="GO:0005216">
    <property type="term" value="F:monoatomic ion channel activity"/>
    <property type="evidence" value="ECO:0007669"/>
    <property type="project" value="InterPro"/>
</dbReference>
<dbReference type="GO" id="GO:0009881">
    <property type="term" value="F:photoreceptor activity"/>
    <property type="evidence" value="ECO:0007669"/>
    <property type="project" value="UniProtKB-KW"/>
</dbReference>
<dbReference type="GO" id="GO:0007602">
    <property type="term" value="P:phototransduction"/>
    <property type="evidence" value="ECO:0007669"/>
    <property type="project" value="UniProtKB-KW"/>
</dbReference>
<dbReference type="CDD" id="cd15029">
    <property type="entry name" value="7tm_SRI_SRII"/>
    <property type="match status" value="1"/>
</dbReference>
<dbReference type="Gene3D" id="1.20.1070.10">
    <property type="entry name" value="Rhodopsin 7-helix transmembrane proteins"/>
    <property type="match status" value="1"/>
</dbReference>
<dbReference type="InterPro" id="IPR001425">
    <property type="entry name" value="Arc/bac/fun_rhodopsins"/>
</dbReference>
<dbReference type="InterPro" id="IPR018229">
    <property type="entry name" value="Rhodopsin_retinal_BS"/>
</dbReference>
<dbReference type="PANTHER" id="PTHR28286">
    <property type="match status" value="1"/>
</dbReference>
<dbReference type="PANTHER" id="PTHR28286:SF2">
    <property type="entry name" value="BACTERIORHODOPSIN _OPSIN, NOPA (EUROFUNG)"/>
    <property type="match status" value="1"/>
</dbReference>
<dbReference type="Pfam" id="PF01036">
    <property type="entry name" value="Bac_rhodopsin"/>
    <property type="match status" value="1"/>
</dbReference>
<dbReference type="PRINTS" id="PR00251">
    <property type="entry name" value="BACTRLOPSIN"/>
</dbReference>
<dbReference type="SMART" id="SM01021">
    <property type="entry name" value="Bac_rhodopsin"/>
    <property type="match status" value="1"/>
</dbReference>
<dbReference type="SUPFAM" id="SSF81321">
    <property type="entry name" value="Family A G protein-coupled receptor-like"/>
    <property type="match status" value="1"/>
</dbReference>
<dbReference type="PROSITE" id="PS00950">
    <property type="entry name" value="BACTERIAL_OPSIN_1"/>
    <property type="match status" value="1"/>
</dbReference>
<dbReference type="PROSITE" id="PS00327">
    <property type="entry name" value="BACTERIAL_OPSIN_RET"/>
    <property type="match status" value="1"/>
</dbReference>
<gene>
    <name type="primary">sop2</name>
    <name type="synonym">sopII</name>
</gene>
<accession>P42196</accession>
<sequence>MVGLTTLFWLGAIGMLVGTLAFAWAGRDAGSGERRYYVTLVGISGIAAVAYVVMALGVGWVPVAERTVFAPRYIDWILTTPLIVYFLGLLAGLDSREFGIVITLNTVVMLAGFAGAMVPGIERYALFGMGAVAFLGLVYYLVGPMTESASQRSSGIKSLYVRLRNLTVILWAIYPFIWLLGPPGVALLTPTVDVALIVYLDLVTKVGFGFIALDAAATLRAEHGESLAGVDTDAPAVAD</sequence>
<keyword id="KW-0002">3D-structure</keyword>
<keyword id="KW-1003">Cell membrane</keyword>
<keyword id="KW-0157">Chromophore</keyword>
<keyword id="KW-0472">Membrane</keyword>
<keyword id="KW-0600">Photoreceptor protein</keyword>
<keyword id="KW-0675">Receptor</keyword>
<keyword id="KW-0681">Retinal protein</keyword>
<keyword id="KW-0716">Sensory transduction</keyword>
<keyword id="KW-0812">Transmembrane</keyword>
<keyword id="KW-1133">Transmembrane helix</keyword>